<name>RSSA_ASPFC</name>
<gene>
    <name type="primary">rps0</name>
    <name type="ORF">AFUB_035880</name>
</gene>
<proteinExistence type="inferred from homology"/>
<evidence type="ECO:0000255" key="1">
    <source>
        <dbReference type="HAMAP-Rule" id="MF_03015"/>
    </source>
</evidence>
<evidence type="ECO:0000256" key="2">
    <source>
        <dbReference type="SAM" id="MobiDB-lite"/>
    </source>
</evidence>
<evidence type="ECO:0000305" key="3"/>
<protein>
    <recommendedName>
        <fullName evidence="1">Small ribosomal subunit protein uS2</fullName>
    </recommendedName>
    <alternativeName>
        <fullName evidence="3">40S ribosomal protein S0</fullName>
    </alternativeName>
</protein>
<keyword id="KW-0963">Cytoplasm</keyword>
<keyword id="KW-0687">Ribonucleoprotein</keyword>
<keyword id="KW-0689">Ribosomal protein</keyword>
<comment type="function">
    <text evidence="1">Required for the assembly and/or stability of the 40S ribosomal subunit. Required for the processing of the 20S rRNA-precursor to mature 18S rRNA in a late step of the maturation of 40S ribosomal subunits.</text>
</comment>
<comment type="subunit">
    <text evidence="1">Component of the small ribosomal subunit. Mature ribosomes consist of a small (40S) and a large (60S) subunit. The 40S subunit contains about 33 different proteins and 1 molecule of RNA (18S). The 60S subunit contains about 49 different proteins and 3 molecules of RNA (25S, 5.8S and 5S). Interacts with rps21.</text>
</comment>
<comment type="subcellular location">
    <subcellularLocation>
        <location evidence="1">Cytoplasm</location>
    </subcellularLocation>
</comment>
<comment type="similarity">
    <text evidence="1">Belongs to the universal ribosomal protein uS2 family.</text>
</comment>
<organism>
    <name type="scientific">Aspergillus fumigatus (strain CBS 144.89 / FGSC A1163 / CEA10)</name>
    <name type="common">Neosartorya fumigata</name>
    <dbReference type="NCBI Taxonomy" id="451804"/>
    <lineage>
        <taxon>Eukaryota</taxon>
        <taxon>Fungi</taxon>
        <taxon>Dikarya</taxon>
        <taxon>Ascomycota</taxon>
        <taxon>Pezizomycotina</taxon>
        <taxon>Eurotiomycetes</taxon>
        <taxon>Eurotiomycetidae</taxon>
        <taxon>Eurotiales</taxon>
        <taxon>Aspergillaceae</taxon>
        <taxon>Aspergillus</taxon>
        <taxon>Aspergillus subgen. Fumigati</taxon>
    </lineage>
</organism>
<sequence>MAPSQLPPIFNPTPQDIEMLLAAQCHLGSKNLQVHMEPYLWKTRPDGVNVINIGKTWEKILLAARIIAAIENPADICVISARPYGQRAVLKFASHTGATAIAGRFTPGNFTNYITRSFKEPRLIIVTDPRTDAQAIKEASYVNIPVIALCDTDSPTEFVDVAIPTNNKGRHAIGLIWWLLAREVLRLRGTLATRETEWDVVVDLYFYRDPEAEENKEIADEAKVPGAEEIGAGAVESGFAGENWDTQAPGAGVPGTAFSAATAAPTSWEADGGDWAASSAAPAGESWAETQPAEAKW</sequence>
<dbReference type="EMBL" id="DS499596">
    <property type="protein sequence ID" value="EDP52422.1"/>
    <property type="molecule type" value="Genomic_DNA"/>
</dbReference>
<dbReference type="SMR" id="B0XWG9"/>
<dbReference type="EnsemblFungi" id="EDP52422">
    <property type="protein sequence ID" value="EDP52422"/>
    <property type="gene ID" value="AFUB_035880"/>
</dbReference>
<dbReference type="VEuPathDB" id="FungiDB:AFUB_035880"/>
<dbReference type="HOGENOM" id="CLU_058171_0_1_1"/>
<dbReference type="OrthoDB" id="109472at5052"/>
<dbReference type="PhylomeDB" id="B0XWG9"/>
<dbReference type="Proteomes" id="UP000001699">
    <property type="component" value="Unassembled WGS sequence"/>
</dbReference>
<dbReference type="GO" id="GO:0022627">
    <property type="term" value="C:cytosolic small ribosomal subunit"/>
    <property type="evidence" value="ECO:0007669"/>
    <property type="project" value="UniProtKB-UniRule"/>
</dbReference>
<dbReference type="GO" id="GO:0003735">
    <property type="term" value="F:structural constituent of ribosome"/>
    <property type="evidence" value="ECO:0007669"/>
    <property type="project" value="UniProtKB-UniRule"/>
</dbReference>
<dbReference type="GO" id="GO:0000028">
    <property type="term" value="P:ribosomal small subunit assembly"/>
    <property type="evidence" value="ECO:0007669"/>
    <property type="project" value="UniProtKB-UniRule"/>
</dbReference>
<dbReference type="GO" id="GO:0006412">
    <property type="term" value="P:translation"/>
    <property type="evidence" value="ECO:0007669"/>
    <property type="project" value="UniProtKB-UniRule"/>
</dbReference>
<dbReference type="CDD" id="cd01425">
    <property type="entry name" value="RPS2"/>
    <property type="match status" value="1"/>
</dbReference>
<dbReference type="FunFam" id="3.40.50.10490:FF:000010">
    <property type="entry name" value="40S ribosomal protein S0"/>
    <property type="match status" value="1"/>
</dbReference>
<dbReference type="Gene3D" id="3.40.50.10490">
    <property type="entry name" value="Glucose-6-phosphate isomerase like protein, domain 1"/>
    <property type="match status" value="1"/>
</dbReference>
<dbReference type="HAMAP" id="MF_03015">
    <property type="entry name" value="Ribosomal_S2_euk"/>
    <property type="match status" value="1"/>
</dbReference>
<dbReference type="InterPro" id="IPR001865">
    <property type="entry name" value="Ribosomal_uS2"/>
</dbReference>
<dbReference type="InterPro" id="IPR032281">
    <property type="entry name" value="Ribosomal_uS2_C"/>
</dbReference>
<dbReference type="InterPro" id="IPR018130">
    <property type="entry name" value="Ribosomal_uS2_CS"/>
</dbReference>
<dbReference type="InterPro" id="IPR027498">
    <property type="entry name" value="Ribosomal_uS2_euk"/>
</dbReference>
<dbReference type="InterPro" id="IPR005707">
    <property type="entry name" value="Ribosomal_uS2_euk/arc"/>
</dbReference>
<dbReference type="InterPro" id="IPR023591">
    <property type="entry name" value="Ribosomal_uS2_flav_dom_sf"/>
</dbReference>
<dbReference type="NCBIfam" id="TIGR01012">
    <property type="entry name" value="uS2_euk_arch"/>
    <property type="match status" value="1"/>
</dbReference>
<dbReference type="PANTHER" id="PTHR11489">
    <property type="entry name" value="40S RIBOSOMAL PROTEIN SA"/>
    <property type="match status" value="1"/>
</dbReference>
<dbReference type="Pfam" id="PF16122">
    <property type="entry name" value="40S_SA_C"/>
    <property type="match status" value="1"/>
</dbReference>
<dbReference type="Pfam" id="PF00318">
    <property type="entry name" value="Ribosomal_S2"/>
    <property type="match status" value="2"/>
</dbReference>
<dbReference type="PRINTS" id="PR00395">
    <property type="entry name" value="RIBOSOMALS2"/>
</dbReference>
<dbReference type="SUPFAM" id="SSF52313">
    <property type="entry name" value="Ribosomal protein S2"/>
    <property type="match status" value="1"/>
</dbReference>
<dbReference type="PROSITE" id="PS00963">
    <property type="entry name" value="RIBOSOMAL_S2_2"/>
    <property type="match status" value="1"/>
</dbReference>
<reference key="1">
    <citation type="journal article" date="2008" name="PLoS Genet.">
        <title>Genomic islands in the pathogenic filamentous fungus Aspergillus fumigatus.</title>
        <authorList>
            <person name="Fedorova N.D."/>
            <person name="Khaldi N."/>
            <person name="Joardar V.S."/>
            <person name="Maiti R."/>
            <person name="Amedeo P."/>
            <person name="Anderson M.J."/>
            <person name="Crabtree J."/>
            <person name="Silva J.C."/>
            <person name="Badger J.H."/>
            <person name="Albarraq A."/>
            <person name="Angiuoli S."/>
            <person name="Bussey H."/>
            <person name="Bowyer P."/>
            <person name="Cotty P.J."/>
            <person name="Dyer P.S."/>
            <person name="Egan A."/>
            <person name="Galens K."/>
            <person name="Fraser-Liggett C.M."/>
            <person name="Haas B.J."/>
            <person name="Inman J.M."/>
            <person name="Kent R."/>
            <person name="Lemieux S."/>
            <person name="Malavazi I."/>
            <person name="Orvis J."/>
            <person name="Roemer T."/>
            <person name="Ronning C.M."/>
            <person name="Sundaram J.P."/>
            <person name="Sutton G."/>
            <person name="Turner G."/>
            <person name="Venter J.C."/>
            <person name="White O.R."/>
            <person name="Whitty B.R."/>
            <person name="Youngman P."/>
            <person name="Wolfe K.H."/>
            <person name="Goldman G.H."/>
            <person name="Wortman J.R."/>
            <person name="Jiang B."/>
            <person name="Denning D.W."/>
            <person name="Nierman W.C."/>
        </authorList>
    </citation>
    <scope>NUCLEOTIDE SEQUENCE [LARGE SCALE GENOMIC DNA]</scope>
    <source>
        <strain>CBS 144.89 / FGSC A1163 / CEA10</strain>
    </source>
</reference>
<feature type="chain" id="PRO_0000371620" description="Small ribosomal subunit protein uS2">
    <location>
        <begin position="1"/>
        <end position="297"/>
    </location>
</feature>
<feature type="region of interest" description="Disordered" evidence="2">
    <location>
        <begin position="252"/>
        <end position="297"/>
    </location>
</feature>
<feature type="compositionally biased region" description="Low complexity" evidence="2">
    <location>
        <begin position="256"/>
        <end position="289"/>
    </location>
</feature>
<accession>B0XWG9</accession>